<accession>P11339</accession>
<comment type="subcellular location">
    <subcellularLocation>
        <location evidence="2">Host membrane</location>
        <topology evidence="2">Single-pass membrane protein</topology>
    </subcellularLocation>
</comment>
<proteinExistence type="predicted"/>
<feature type="chain" id="PRO_0000065802" description="Uncharacterized protein ORF7">
    <location>
        <begin position="1"/>
        <end position="48"/>
    </location>
</feature>
<feature type="transmembrane region" description="Helical" evidence="1">
    <location>
        <begin position="6"/>
        <end position="26"/>
    </location>
</feature>
<organismHost>
    <name type="scientific">Spiroplasma melliferum</name>
    <dbReference type="NCBI Taxonomy" id="2134"/>
</organismHost>
<reference key="1">
    <citation type="journal article" date="1987" name="J. Bacteriol.">
        <title>Spiroplasma virus 4: nucleotide sequence of the viral DNA, regulatory signals, and proposed genome organization.</title>
        <authorList>
            <person name="Renaudin J."/>
            <person name="Pascarel M.-C."/>
            <person name="Bove J.-M."/>
        </authorList>
    </citation>
    <scope>NUCLEOTIDE SEQUENCE [GENOMIC DNA]</scope>
</reference>
<dbReference type="EMBL" id="M17988">
    <property type="status" value="NOT_ANNOTATED_CDS"/>
    <property type="molecule type" value="Genomic_DNA"/>
</dbReference>
<dbReference type="PIR" id="I29825">
    <property type="entry name" value="G7BPSV"/>
</dbReference>
<dbReference type="SMR" id="P11339"/>
<dbReference type="Proteomes" id="UP000002101">
    <property type="component" value="Genome"/>
</dbReference>
<dbReference type="GO" id="GO:0033644">
    <property type="term" value="C:host cell membrane"/>
    <property type="evidence" value="ECO:0007669"/>
    <property type="project" value="UniProtKB-SubCell"/>
</dbReference>
<dbReference type="GO" id="GO:0016020">
    <property type="term" value="C:membrane"/>
    <property type="evidence" value="ECO:0007669"/>
    <property type="project" value="UniProtKB-KW"/>
</dbReference>
<evidence type="ECO:0000255" key="1"/>
<evidence type="ECO:0000305" key="2"/>
<protein>
    <recommendedName>
        <fullName>Uncharacterized protein ORF7</fullName>
    </recommendedName>
</protein>
<name>ORF7_SPV4</name>
<gene>
    <name type="ORF">ORF7</name>
</gene>
<organism>
    <name type="scientific">Spiroplasma virus 4</name>
    <name type="common">SpV4</name>
    <dbReference type="NCBI Taxonomy" id="2928746"/>
    <lineage>
        <taxon>Viruses</taxon>
        <taxon>Monodnaviria</taxon>
        <taxon>Sangervirae</taxon>
        <taxon>Phixviricota</taxon>
        <taxon>Malgrandaviricetes</taxon>
        <taxon>Petitvirales</taxon>
        <taxon>Microviridae</taxon>
        <taxon>Gokushovirinae</taxon>
        <taxon>Spiromicrovirus</taxon>
        <taxon>Spiromicrovirus SpV4</taxon>
    </lineage>
</organism>
<keyword id="KW-1043">Host membrane</keyword>
<keyword id="KW-0472">Membrane</keyword>
<keyword id="KW-1185">Reference proteome</keyword>
<keyword id="KW-0812">Transmembrane</keyword>
<keyword id="KW-1133">Transmembrane helix</keyword>
<sequence>MIWIKIILLMIVCLVVSVLVVVWIILLSEVFVLLWKLSQILNIIDLLL</sequence>